<accession>Q7A0W3</accession>
<dbReference type="EMBL" id="BA000033">
    <property type="protein sequence ID" value="BAB95176.1"/>
    <property type="molecule type" value="Genomic_DNA"/>
</dbReference>
<dbReference type="RefSeq" id="WP_000801007.1">
    <property type="nucleotide sequence ID" value="NC_003923.1"/>
</dbReference>
<dbReference type="PDB" id="2O6K">
    <property type="method" value="X-ray"/>
    <property type="resolution" value="2.10 A"/>
    <property type="chains" value="A/B=1-73"/>
</dbReference>
<dbReference type="PDBsum" id="2O6K"/>
<dbReference type="SMR" id="Q7A0W3"/>
<dbReference type="KEGG" id="sam:MW1311"/>
<dbReference type="HOGENOM" id="CLU_177534_1_0_9"/>
<dbReference type="EvolutionaryTrace" id="Q7A0W3"/>
<dbReference type="Gene3D" id="1.10.150.260">
    <property type="entry name" value="YozE SAM-like"/>
    <property type="match status" value="1"/>
</dbReference>
<dbReference type="HAMAP" id="MF_01538">
    <property type="entry name" value="UPF0346"/>
    <property type="match status" value="1"/>
</dbReference>
<dbReference type="InterPro" id="IPR010673">
    <property type="entry name" value="UPF0346"/>
</dbReference>
<dbReference type="InterPro" id="IPR023089">
    <property type="entry name" value="YozE_SAM-like"/>
</dbReference>
<dbReference type="InterPro" id="IPR036806">
    <property type="entry name" value="YozE_SAM-like_sf"/>
</dbReference>
<dbReference type="NCBIfam" id="NF010193">
    <property type="entry name" value="PRK13672.1"/>
    <property type="match status" value="1"/>
</dbReference>
<dbReference type="Pfam" id="PF06855">
    <property type="entry name" value="YozE_SAM_like"/>
    <property type="match status" value="1"/>
</dbReference>
<dbReference type="PIRSF" id="PIRSF037262">
    <property type="entry name" value="UCP037262"/>
    <property type="match status" value="1"/>
</dbReference>
<dbReference type="SUPFAM" id="SSF140652">
    <property type="entry name" value="YozE-like"/>
    <property type="match status" value="1"/>
</dbReference>
<reference key="1">
    <citation type="journal article" date="2002" name="Lancet">
        <title>Genome and virulence determinants of high virulence community-acquired MRSA.</title>
        <authorList>
            <person name="Baba T."/>
            <person name="Takeuchi F."/>
            <person name="Kuroda M."/>
            <person name="Yuzawa H."/>
            <person name="Aoki K."/>
            <person name="Oguchi A."/>
            <person name="Nagai Y."/>
            <person name="Iwama N."/>
            <person name="Asano K."/>
            <person name="Naimi T."/>
            <person name="Kuroda H."/>
            <person name="Cui L."/>
            <person name="Yamamoto K."/>
            <person name="Hiramatsu K."/>
        </authorList>
    </citation>
    <scope>NUCLEOTIDE SEQUENCE [LARGE SCALE GENOMIC DNA]</scope>
    <source>
        <strain>MW2</strain>
    </source>
</reference>
<reference key="2">
    <citation type="submission" date="2006-12" db="PDB data bank">
        <title>Crystal structure of UPF0346 from Staphylococcus aureus. Northeast structural genomics target ZR218.</title>
        <authorList>
            <consortium name="Northeast structural genomics consortium (NESG)"/>
        </authorList>
    </citation>
    <scope>X-RAY CRYSTALLOGRAPHY (2.1 ANGSTROMS)</scope>
</reference>
<protein>
    <recommendedName>
        <fullName evidence="1">UPF0346 protein MW1311</fullName>
    </recommendedName>
</protein>
<keyword id="KW-0002">3D-structure</keyword>
<sequence>MKNYSFYQFVMTVRGRHDDKGRLAEEIFDDLAFPKHDDDFNILSDYIETHGDFTLPMSVFDDLYEEYTEWLKF</sequence>
<organism>
    <name type="scientific">Staphylococcus aureus (strain MW2)</name>
    <dbReference type="NCBI Taxonomy" id="196620"/>
    <lineage>
        <taxon>Bacteria</taxon>
        <taxon>Bacillati</taxon>
        <taxon>Bacillota</taxon>
        <taxon>Bacilli</taxon>
        <taxon>Bacillales</taxon>
        <taxon>Staphylococcaceae</taxon>
        <taxon>Staphylococcus</taxon>
    </lineage>
</organism>
<proteinExistence type="evidence at protein level"/>
<name>Y1311_STAAW</name>
<gene>
    <name type="ordered locus">MW1311</name>
</gene>
<comment type="similarity">
    <text evidence="1">Belongs to the UPF0346 family.</text>
</comment>
<evidence type="ECO:0000255" key="1">
    <source>
        <dbReference type="HAMAP-Rule" id="MF_01538"/>
    </source>
</evidence>
<evidence type="ECO:0007829" key="2">
    <source>
        <dbReference type="PDB" id="2O6K"/>
    </source>
</evidence>
<feature type="chain" id="PRO_0000164287" description="UPF0346 protein MW1311">
    <location>
        <begin position="1"/>
        <end position="73"/>
    </location>
</feature>
<feature type="helix" evidence="2">
    <location>
        <begin position="6"/>
        <end position="13"/>
    </location>
</feature>
<feature type="helix" evidence="2">
    <location>
        <begin position="19"/>
        <end position="29"/>
    </location>
</feature>
<feature type="helix" evidence="2">
    <location>
        <begin position="40"/>
        <end position="50"/>
    </location>
</feature>
<feature type="helix" evidence="2">
    <location>
        <begin position="57"/>
        <end position="73"/>
    </location>
</feature>